<organism>
    <name type="scientific">Myxococcus xanthus (strain DK1622)</name>
    <dbReference type="NCBI Taxonomy" id="246197"/>
    <lineage>
        <taxon>Bacteria</taxon>
        <taxon>Pseudomonadati</taxon>
        <taxon>Myxococcota</taxon>
        <taxon>Myxococcia</taxon>
        <taxon>Myxococcales</taxon>
        <taxon>Cystobacterineae</taxon>
        <taxon>Myxococcaceae</taxon>
        <taxon>Myxococcus</taxon>
    </lineage>
</organism>
<feature type="chain" id="PRO_0000267061" description="Enolase">
    <location>
        <begin position="1"/>
        <end position="432"/>
    </location>
</feature>
<feature type="active site" description="Proton donor" evidence="1">
    <location>
        <position position="205"/>
    </location>
</feature>
<feature type="active site" description="Proton acceptor" evidence="1">
    <location>
        <position position="339"/>
    </location>
</feature>
<feature type="binding site" evidence="1">
    <location>
        <position position="163"/>
    </location>
    <ligand>
        <name>(2R)-2-phosphoglycerate</name>
        <dbReference type="ChEBI" id="CHEBI:58289"/>
    </ligand>
</feature>
<feature type="binding site" evidence="1">
    <location>
        <position position="242"/>
    </location>
    <ligand>
        <name>Mg(2+)</name>
        <dbReference type="ChEBI" id="CHEBI:18420"/>
    </ligand>
</feature>
<feature type="binding site" evidence="1">
    <location>
        <position position="287"/>
    </location>
    <ligand>
        <name>Mg(2+)</name>
        <dbReference type="ChEBI" id="CHEBI:18420"/>
    </ligand>
</feature>
<feature type="binding site" evidence="1">
    <location>
        <position position="314"/>
    </location>
    <ligand>
        <name>Mg(2+)</name>
        <dbReference type="ChEBI" id="CHEBI:18420"/>
    </ligand>
</feature>
<feature type="binding site" evidence="1">
    <location>
        <position position="339"/>
    </location>
    <ligand>
        <name>(2R)-2-phosphoglycerate</name>
        <dbReference type="ChEBI" id="CHEBI:58289"/>
    </ligand>
</feature>
<feature type="binding site" evidence="1">
    <location>
        <position position="368"/>
    </location>
    <ligand>
        <name>(2R)-2-phosphoglycerate</name>
        <dbReference type="ChEBI" id="CHEBI:58289"/>
    </ligand>
</feature>
<feature type="binding site" evidence="1">
    <location>
        <position position="369"/>
    </location>
    <ligand>
        <name>(2R)-2-phosphoglycerate</name>
        <dbReference type="ChEBI" id="CHEBI:58289"/>
    </ligand>
</feature>
<feature type="binding site" evidence="1">
    <location>
        <position position="390"/>
    </location>
    <ligand>
        <name>(2R)-2-phosphoglycerate</name>
        <dbReference type="ChEBI" id="CHEBI:58289"/>
    </ligand>
</feature>
<reference key="1">
    <citation type="journal article" date="2006" name="Proc. Natl. Acad. Sci. U.S.A.">
        <title>Evolution of sensory complexity recorded in a myxobacterial genome.</title>
        <authorList>
            <person name="Goldman B.S."/>
            <person name="Nierman W.C."/>
            <person name="Kaiser D."/>
            <person name="Slater S.C."/>
            <person name="Durkin A.S."/>
            <person name="Eisen J.A."/>
            <person name="Ronning C.M."/>
            <person name="Barbazuk W.B."/>
            <person name="Blanchard M."/>
            <person name="Field C."/>
            <person name="Halling C."/>
            <person name="Hinkle G."/>
            <person name="Iartchuk O."/>
            <person name="Kim H.S."/>
            <person name="Mackenzie C."/>
            <person name="Madupu R."/>
            <person name="Miller N."/>
            <person name="Shvartsbeyn A."/>
            <person name="Sullivan S.A."/>
            <person name="Vaudin M."/>
            <person name="Wiegand R."/>
            <person name="Kaplan H.B."/>
        </authorList>
    </citation>
    <scope>NUCLEOTIDE SEQUENCE [LARGE SCALE GENOMIC DNA]</scope>
    <source>
        <strain>DK1622</strain>
    </source>
</reference>
<evidence type="ECO:0000255" key="1">
    <source>
        <dbReference type="HAMAP-Rule" id="MF_00318"/>
    </source>
</evidence>
<keyword id="KW-0963">Cytoplasm</keyword>
<keyword id="KW-0324">Glycolysis</keyword>
<keyword id="KW-0456">Lyase</keyword>
<keyword id="KW-0460">Magnesium</keyword>
<keyword id="KW-0479">Metal-binding</keyword>
<keyword id="KW-1185">Reference proteome</keyword>
<keyword id="KW-0964">Secreted</keyword>
<proteinExistence type="inferred from homology"/>
<protein>
    <recommendedName>
        <fullName evidence="1">Enolase</fullName>
        <ecNumber evidence="1">4.2.1.11</ecNumber>
    </recommendedName>
    <alternativeName>
        <fullName evidence="1">2-phospho-D-glycerate hydro-lyase</fullName>
    </alternativeName>
    <alternativeName>
        <fullName evidence="1">2-phosphoglycerate dehydratase</fullName>
    </alternativeName>
</protein>
<sequence length="432" mass="46144">MTEISQILAREVLDSRGNPTVEAEVQLAGGARGRAAVPSGASTGEHEAIELRDGDKHRYLGKGVQKAVKNVVDVLAPALVGMDAADQFAVDQRMLELDGTATKGKLGANAILAVSMAAARAAADAHGLPLYRYVGGVQARTLPVPLMNILNGGAHADTRVDVQEFMVVPAGASSFAEGLRWGAEVFHALKKILKGRKLATGVGDEGGYAPDLPANEEALKLIMEAIDQAGFKAGEQLFLALDVAASEFFDKGSKKYKLKGEGKEYDSTGLLEYYRGLSERYPIISIEDGMAEDDWEGWKKLTDALGSRMQLVGDDLFVTNVERLGRGIETGTANSILVKVNQIGTLTETFDAVRMAHRAGYTSVMSHRSGETEDTTIADLAVALDCGQIKTGSASRSDRVAKYNQLLRIEGELGAAARYAGKSVFRALNQKK</sequence>
<dbReference type="EC" id="4.2.1.11" evidence="1"/>
<dbReference type="EMBL" id="CP000113">
    <property type="protein sequence ID" value="ABF90869.1"/>
    <property type="molecule type" value="Genomic_DNA"/>
</dbReference>
<dbReference type="RefSeq" id="WP_011554450.1">
    <property type="nucleotide sequence ID" value="NC_008095.1"/>
</dbReference>
<dbReference type="SMR" id="Q1D401"/>
<dbReference type="STRING" id="246197.MXAN_4451"/>
<dbReference type="EnsemblBacteria" id="ABF90869">
    <property type="protein sequence ID" value="ABF90869"/>
    <property type="gene ID" value="MXAN_4451"/>
</dbReference>
<dbReference type="GeneID" id="41361763"/>
<dbReference type="KEGG" id="mxa:MXAN_4451"/>
<dbReference type="eggNOG" id="COG0148">
    <property type="taxonomic scope" value="Bacteria"/>
</dbReference>
<dbReference type="HOGENOM" id="CLU_031223_2_1_7"/>
<dbReference type="OrthoDB" id="9804716at2"/>
<dbReference type="UniPathway" id="UPA00109">
    <property type="reaction ID" value="UER00187"/>
</dbReference>
<dbReference type="Proteomes" id="UP000002402">
    <property type="component" value="Chromosome"/>
</dbReference>
<dbReference type="GO" id="GO:0009986">
    <property type="term" value="C:cell surface"/>
    <property type="evidence" value="ECO:0007669"/>
    <property type="project" value="UniProtKB-SubCell"/>
</dbReference>
<dbReference type="GO" id="GO:0005576">
    <property type="term" value="C:extracellular region"/>
    <property type="evidence" value="ECO:0007669"/>
    <property type="project" value="UniProtKB-SubCell"/>
</dbReference>
<dbReference type="GO" id="GO:0000015">
    <property type="term" value="C:phosphopyruvate hydratase complex"/>
    <property type="evidence" value="ECO:0007669"/>
    <property type="project" value="InterPro"/>
</dbReference>
<dbReference type="GO" id="GO:0000287">
    <property type="term" value="F:magnesium ion binding"/>
    <property type="evidence" value="ECO:0007669"/>
    <property type="project" value="UniProtKB-UniRule"/>
</dbReference>
<dbReference type="GO" id="GO:0004634">
    <property type="term" value="F:phosphopyruvate hydratase activity"/>
    <property type="evidence" value="ECO:0007669"/>
    <property type="project" value="UniProtKB-UniRule"/>
</dbReference>
<dbReference type="GO" id="GO:0006096">
    <property type="term" value="P:glycolytic process"/>
    <property type="evidence" value="ECO:0007669"/>
    <property type="project" value="UniProtKB-UniRule"/>
</dbReference>
<dbReference type="CDD" id="cd03313">
    <property type="entry name" value="enolase"/>
    <property type="match status" value="1"/>
</dbReference>
<dbReference type="FunFam" id="3.20.20.120:FF:000001">
    <property type="entry name" value="Enolase"/>
    <property type="match status" value="1"/>
</dbReference>
<dbReference type="FunFam" id="3.30.390.10:FF:000001">
    <property type="entry name" value="Enolase"/>
    <property type="match status" value="1"/>
</dbReference>
<dbReference type="Gene3D" id="3.20.20.120">
    <property type="entry name" value="Enolase-like C-terminal domain"/>
    <property type="match status" value="1"/>
</dbReference>
<dbReference type="Gene3D" id="3.30.390.10">
    <property type="entry name" value="Enolase-like, N-terminal domain"/>
    <property type="match status" value="1"/>
</dbReference>
<dbReference type="HAMAP" id="MF_00318">
    <property type="entry name" value="Enolase"/>
    <property type="match status" value="1"/>
</dbReference>
<dbReference type="InterPro" id="IPR000941">
    <property type="entry name" value="Enolase"/>
</dbReference>
<dbReference type="InterPro" id="IPR036849">
    <property type="entry name" value="Enolase-like_C_sf"/>
</dbReference>
<dbReference type="InterPro" id="IPR029017">
    <property type="entry name" value="Enolase-like_N"/>
</dbReference>
<dbReference type="InterPro" id="IPR020810">
    <property type="entry name" value="Enolase_C"/>
</dbReference>
<dbReference type="InterPro" id="IPR020809">
    <property type="entry name" value="Enolase_CS"/>
</dbReference>
<dbReference type="InterPro" id="IPR020811">
    <property type="entry name" value="Enolase_N"/>
</dbReference>
<dbReference type="NCBIfam" id="TIGR01060">
    <property type="entry name" value="eno"/>
    <property type="match status" value="1"/>
</dbReference>
<dbReference type="PANTHER" id="PTHR11902">
    <property type="entry name" value="ENOLASE"/>
    <property type="match status" value="1"/>
</dbReference>
<dbReference type="PANTHER" id="PTHR11902:SF1">
    <property type="entry name" value="ENOLASE"/>
    <property type="match status" value="1"/>
</dbReference>
<dbReference type="Pfam" id="PF00113">
    <property type="entry name" value="Enolase_C"/>
    <property type="match status" value="1"/>
</dbReference>
<dbReference type="Pfam" id="PF03952">
    <property type="entry name" value="Enolase_N"/>
    <property type="match status" value="1"/>
</dbReference>
<dbReference type="PIRSF" id="PIRSF001400">
    <property type="entry name" value="Enolase"/>
    <property type="match status" value="1"/>
</dbReference>
<dbReference type="PRINTS" id="PR00148">
    <property type="entry name" value="ENOLASE"/>
</dbReference>
<dbReference type="SFLD" id="SFLDF00002">
    <property type="entry name" value="enolase"/>
    <property type="match status" value="1"/>
</dbReference>
<dbReference type="SFLD" id="SFLDG00178">
    <property type="entry name" value="enolase"/>
    <property type="match status" value="1"/>
</dbReference>
<dbReference type="SMART" id="SM01192">
    <property type="entry name" value="Enolase_C"/>
    <property type="match status" value="1"/>
</dbReference>
<dbReference type="SMART" id="SM01193">
    <property type="entry name" value="Enolase_N"/>
    <property type="match status" value="1"/>
</dbReference>
<dbReference type="SUPFAM" id="SSF51604">
    <property type="entry name" value="Enolase C-terminal domain-like"/>
    <property type="match status" value="1"/>
</dbReference>
<dbReference type="SUPFAM" id="SSF54826">
    <property type="entry name" value="Enolase N-terminal domain-like"/>
    <property type="match status" value="1"/>
</dbReference>
<dbReference type="PROSITE" id="PS00164">
    <property type="entry name" value="ENOLASE"/>
    <property type="match status" value="1"/>
</dbReference>
<comment type="function">
    <text evidence="1">Catalyzes the reversible conversion of 2-phosphoglycerate (2-PG) into phosphoenolpyruvate (PEP). It is essential for the degradation of carbohydrates via glycolysis.</text>
</comment>
<comment type="catalytic activity">
    <reaction evidence="1">
        <text>(2R)-2-phosphoglycerate = phosphoenolpyruvate + H2O</text>
        <dbReference type="Rhea" id="RHEA:10164"/>
        <dbReference type="ChEBI" id="CHEBI:15377"/>
        <dbReference type="ChEBI" id="CHEBI:58289"/>
        <dbReference type="ChEBI" id="CHEBI:58702"/>
        <dbReference type="EC" id="4.2.1.11"/>
    </reaction>
</comment>
<comment type="cofactor">
    <cofactor evidence="1">
        <name>Mg(2+)</name>
        <dbReference type="ChEBI" id="CHEBI:18420"/>
    </cofactor>
    <text evidence="1">Binds a second Mg(2+) ion via substrate during catalysis.</text>
</comment>
<comment type="pathway">
    <text evidence="1">Carbohydrate degradation; glycolysis; pyruvate from D-glyceraldehyde 3-phosphate: step 4/5.</text>
</comment>
<comment type="subcellular location">
    <subcellularLocation>
        <location evidence="1">Cytoplasm</location>
    </subcellularLocation>
    <subcellularLocation>
        <location evidence="1">Secreted</location>
    </subcellularLocation>
    <subcellularLocation>
        <location evidence="1">Cell surface</location>
    </subcellularLocation>
    <text evidence="1">Fractions of enolase are present in both the cytoplasm and on the cell surface.</text>
</comment>
<comment type="similarity">
    <text evidence="1">Belongs to the enolase family.</text>
</comment>
<name>ENO_MYXXD</name>
<gene>
    <name evidence="1" type="primary">eno</name>
    <name type="ordered locus">MXAN_4451</name>
</gene>
<accession>Q1D401</accession>